<organism>
    <name type="scientific">Azobacteroides pseudotrichonymphae genomovar. CFP2</name>
    <dbReference type="NCBI Taxonomy" id="511995"/>
    <lineage>
        <taxon>Bacteria</taxon>
        <taxon>Pseudomonadati</taxon>
        <taxon>Bacteroidota</taxon>
        <taxon>Bacteroidia</taxon>
        <taxon>Bacteroidales</taxon>
        <taxon>Candidatus Azobacteroides</taxon>
    </lineage>
</organism>
<reference key="1">
    <citation type="journal article" date="2008" name="Science">
        <title>Genome of an endosymbiont coupling N2 fixation to cellulolysis within RT protist cells in termite gut.</title>
        <authorList>
            <person name="Hongoh Y."/>
            <person name="Sharma V.K."/>
            <person name="Prakash T."/>
            <person name="Noda S."/>
            <person name="Toh H."/>
            <person name="Taylor T.D."/>
            <person name="Kudo T."/>
            <person name="Sakaki Y."/>
            <person name="Toyoda A."/>
            <person name="Hattori M."/>
            <person name="Ohkuma M."/>
        </authorList>
    </citation>
    <scope>NUCLEOTIDE SEQUENCE [LARGE SCALE GENOMIC DNA]</scope>
</reference>
<evidence type="ECO:0000255" key="1">
    <source>
        <dbReference type="HAMAP-Rule" id="MF_01217"/>
    </source>
</evidence>
<evidence type="ECO:0000255" key="2">
    <source>
        <dbReference type="PROSITE-ProRule" id="PRU00258"/>
    </source>
</evidence>
<comment type="function">
    <text evidence="1">Carrier of the growing fatty acid chain in fatty acid biosynthesis.</text>
</comment>
<comment type="pathway">
    <text evidence="1">Lipid metabolism; fatty acid biosynthesis.</text>
</comment>
<comment type="subcellular location">
    <subcellularLocation>
        <location evidence="1">Cytoplasm</location>
    </subcellularLocation>
</comment>
<comment type="PTM">
    <text evidence="1">4'-phosphopantetheine is transferred from CoA to a specific serine of apo-ACP by AcpS. This modification is essential for activity because fatty acids are bound in thioester linkage to the sulfhydryl of the prosthetic group.</text>
</comment>
<comment type="similarity">
    <text evidence="1">Belongs to the acyl carrier protein (ACP) family.</text>
</comment>
<sequence>MSQISERVIDLISEKLNVEKSEVTLEADFANNLGADSLDTVELIMDLEKEFNMNPIPNDESIAIKTVGDAIAYIESHANEAATKS</sequence>
<feature type="chain" id="PRO_1000138997" description="Acyl carrier protein">
    <location>
        <begin position="1"/>
        <end position="85"/>
    </location>
</feature>
<feature type="domain" description="Carrier" evidence="2">
    <location>
        <begin position="2"/>
        <end position="78"/>
    </location>
</feature>
<feature type="modified residue" description="O-(pantetheine 4'-phosphoryl)serine" evidence="2">
    <location>
        <position position="37"/>
    </location>
</feature>
<protein>
    <recommendedName>
        <fullName evidence="1">Acyl carrier protein</fullName>
        <shortName evidence="1">ACP</shortName>
    </recommendedName>
</protein>
<keyword id="KW-0963">Cytoplasm</keyword>
<keyword id="KW-0275">Fatty acid biosynthesis</keyword>
<keyword id="KW-0276">Fatty acid metabolism</keyword>
<keyword id="KW-0444">Lipid biosynthesis</keyword>
<keyword id="KW-0443">Lipid metabolism</keyword>
<keyword id="KW-0596">Phosphopantetheine</keyword>
<keyword id="KW-0597">Phosphoprotein</keyword>
<keyword id="KW-1185">Reference proteome</keyword>
<name>ACP_AZOPC</name>
<proteinExistence type="inferred from homology"/>
<dbReference type="EMBL" id="AP010656">
    <property type="protein sequence ID" value="BAG83643.1"/>
    <property type="molecule type" value="Genomic_DNA"/>
</dbReference>
<dbReference type="RefSeq" id="WP_012573404.1">
    <property type="nucleotide sequence ID" value="NC_011565.1"/>
</dbReference>
<dbReference type="SMR" id="B6YR21"/>
<dbReference type="STRING" id="511995.CFPG_380"/>
<dbReference type="KEGG" id="aps:CFPG_380"/>
<dbReference type="eggNOG" id="COG0236">
    <property type="taxonomic scope" value="Bacteria"/>
</dbReference>
<dbReference type="HOGENOM" id="CLU_108696_5_1_10"/>
<dbReference type="OrthoDB" id="9804551at2"/>
<dbReference type="UniPathway" id="UPA00094"/>
<dbReference type="Proteomes" id="UP000000723">
    <property type="component" value="Chromosome"/>
</dbReference>
<dbReference type="GO" id="GO:0005829">
    <property type="term" value="C:cytosol"/>
    <property type="evidence" value="ECO:0007669"/>
    <property type="project" value="TreeGrafter"/>
</dbReference>
<dbReference type="GO" id="GO:0016020">
    <property type="term" value="C:membrane"/>
    <property type="evidence" value="ECO:0007669"/>
    <property type="project" value="GOC"/>
</dbReference>
<dbReference type="GO" id="GO:0000035">
    <property type="term" value="F:acyl binding"/>
    <property type="evidence" value="ECO:0007669"/>
    <property type="project" value="TreeGrafter"/>
</dbReference>
<dbReference type="GO" id="GO:0000036">
    <property type="term" value="F:acyl carrier activity"/>
    <property type="evidence" value="ECO:0007669"/>
    <property type="project" value="UniProtKB-UniRule"/>
</dbReference>
<dbReference type="GO" id="GO:0009245">
    <property type="term" value="P:lipid A biosynthetic process"/>
    <property type="evidence" value="ECO:0007669"/>
    <property type="project" value="TreeGrafter"/>
</dbReference>
<dbReference type="Gene3D" id="1.10.1200.10">
    <property type="entry name" value="ACP-like"/>
    <property type="match status" value="1"/>
</dbReference>
<dbReference type="HAMAP" id="MF_01217">
    <property type="entry name" value="Acyl_carrier"/>
    <property type="match status" value="1"/>
</dbReference>
<dbReference type="InterPro" id="IPR003231">
    <property type="entry name" value="ACP"/>
</dbReference>
<dbReference type="InterPro" id="IPR036736">
    <property type="entry name" value="ACP-like_sf"/>
</dbReference>
<dbReference type="InterPro" id="IPR009081">
    <property type="entry name" value="PP-bd_ACP"/>
</dbReference>
<dbReference type="NCBIfam" id="TIGR00517">
    <property type="entry name" value="acyl_carrier"/>
    <property type="match status" value="1"/>
</dbReference>
<dbReference type="NCBIfam" id="NF002148">
    <property type="entry name" value="PRK00982.1-2"/>
    <property type="match status" value="1"/>
</dbReference>
<dbReference type="NCBIfam" id="NF002150">
    <property type="entry name" value="PRK00982.1-4"/>
    <property type="match status" value="1"/>
</dbReference>
<dbReference type="NCBIfam" id="NF002151">
    <property type="entry name" value="PRK00982.1-5"/>
    <property type="match status" value="1"/>
</dbReference>
<dbReference type="PANTHER" id="PTHR20863">
    <property type="entry name" value="ACYL CARRIER PROTEIN"/>
    <property type="match status" value="1"/>
</dbReference>
<dbReference type="PANTHER" id="PTHR20863:SF76">
    <property type="entry name" value="CARRIER DOMAIN-CONTAINING PROTEIN"/>
    <property type="match status" value="1"/>
</dbReference>
<dbReference type="Pfam" id="PF00550">
    <property type="entry name" value="PP-binding"/>
    <property type="match status" value="1"/>
</dbReference>
<dbReference type="SUPFAM" id="SSF47336">
    <property type="entry name" value="ACP-like"/>
    <property type="match status" value="1"/>
</dbReference>
<dbReference type="PROSITE" id="PS50075">
    <property type="entry name" value="CARRIER"/>
    <property type="match status" value="1"/>
</dbReference>
<accession>B6YR21</accession>
<gene>
    <name evidence="1" type="primary">acpP</name>
    <name type="ordered locus">CFPG_380</name>
</gene>